<sequence>MEMEANDHFNFTGLPPAPAASGLKPSPSSGEGLYTNGSPMNFPQQGKSLNGDVNVNGLSTVSHTTTSGILNSAPHSSSTSHLHHPNVAYDCLWNYSQYPSANPGNNLKDPPLLSQFPGGQYPLNGILGGNRQPSSPSHNTNLRAGSQEFWANGTQSPMGLNFDSQELYDSFPDQNFEVMPNGPPSFFTSPQTSPMLGSSIQTFAPSQDVSSDIHPDEAAEKELTSVVAENGTGLVGSLELEEEQPELKMCGYNGSVSSVESLHQEVSVLVPDPTVSCLDDPSHLPDQLEDTPILSEDSLEPFDSLAAEPVSGSLYGIDDAELMGAEDKLPLEGNPVISALDCPALSNANAFSLLADDSQTSASIFVSPTSPPVLGESVLQDNSFGLNSCSDSEQEEIETQSSNFQRPLTEPAPDQPPSTQLHPAVSPTASPAASLTASAEISPAVSPVASSPVPPEVFVAVSPASSPALPAISLEASMTTPVTSPQGSPEPSPAAAFQTVSPARKNVSSAPKARADREETTGGAVAVSGSGDVLKRRIATPEEVRLPLQHGWRREVRIKKGSHRWQGETWYYGPCGKRMKQFPEVIKYLSRNVVHSVRREHFSFSPRMPVGDFFEERDTPEGLQWVQLSAEEIPSRIQAITGKRGRPRNNEKAKNKEVPKVKRGRGRPPKIKMPELLNKTDNRLPKKLETQEILSEDDKAKMTKNKKKMRQKVQRGESQTPVQGQARNKRKQDTKSLKQKDTKKKLKAEKEKMKTKQEKLKEKVKREKKEKVKAKGKEGPRARPSCRADKTLATQKRLEEQQRQQAILEEMKKPTEGMCLSDHQPLPDFTRIPGLTLSSRAFSDCLTIVEFLHSFGKVLGFDLTKDVPSLGVLQEGLLCQGDSLDKVQDLLVRLLKAALHDPGLPPYCQSLKILGEKMSEIPLTRDNVSEILRCFLMAYRVEPPFCDSLRTQPFQAQPPQQKAAILAFLVHELNSSTIIINEIDKTLESVSSCRKNKWIVEGRLRRLKTALAKRTGRPEVMMEGAEDGLGRRRSSRIMEETSGIEEEEEEENTTAVHGRRGRKEGEIDVAASSIPELERHIEKLSKRQLFFRKKLLHSSQMLRAVSLGQDRYRRHYWVLPYLAGIFVEGSEGSTVTEDEIKQETESLMEVVTSTPSSARASVKRELTGSNASTSPARSRGRPRKPKPGSLQPQHLQSTIRECDSEQAQTQVHPEPQPQLQAPTQPHLQPSSGFLEPEGSPFSLGQSQHDLSQSAFLSWLSQTQSHNSLLSSSVLTPDSSPGKLDSAPSQSLEEPEPDEAQSCPGPQGPWFNFSAQIPCDAAPTPPPAVSEDQPTPSLQLLASSKPMNTPGAANPCSPVQLSSTHLPGGTPKRLSGDSEEMSQSPTGLGQPKRRGRPPSKFFKQVEQHYLTQLTAQPIPPEMCSGWWWIRDPETLDVLLKALHPRGIREKALHKHLSKHKDFLQEVCLQPLTDPIFEPNELPALEEGVMSWSPKEKTYETDLAVLQWVEELEQRVVLSDLQIRGWTCPTPDSTREDLTYCEHLPDSPEDIPWRGRGREGTVPQRQNNNPLDLAVMRLAVLEQNVERRYLREPLWAAHEVVVEKALLSTPNGAPDGTSTEISYEITPRVRVWRQTLERCRSAAQVCLCMGQLERSIAWEKSVNKVTCLVCRKGDNDEFLLLCDGCDRGCHIYCHRPKMEAVPEGDWFCAVCLSQQVEEEYTQRPGFPKRGQKRKSSFPLTFPEGDSRRRMLSRSRDSPAVPRYPEDGLSPPKRRRHSMRSHHSDLTFCEIILMEMESHDAAWPFLEPVNPRLVSGYRRVIKNPMDFSTMRERLLRGGYTSSEEFAADALLVFDNCQTFNEDDSEVGKAGHVMRRFFESRWEEFYQGKQANL</sequence>
<reference key="1">
    <citation type="journal article" date="2005" name="Science">
        <title>The transcriptional landscape of the mammalian genome.</title>
        <authorList>
            <person name="Carninci P."/>
            <person name="Kasukawa T."/>
            <person name="Katayama S."/>
            <person name="Gough J."/>
            <person name="Frith M.C."/>
            <person name="Maeda N."/>
            <person name="Oyama R."/>
            <person name="Ravasi T."/>
            <person name="Lenhard B."/>
            <person name="Wells C."/>
            <person name="Kodzius R."/>
            <person name="Shimokawa K."/>
            <person name="Bajic V.B."/>
            <person name="Brenner S.E."/>
            <person name="Batalov S."/>
            <person name="Forrest A.R."/>
            <person name="Zavolan M."/>
            <person name="Davis M.J."/>
            <person name="Wilming L.G."/>
            <person name="Aidinis V."/>
            <person name="Allen J.E."/>
            <person name="Ambesi-Impiombato A."/>
            <person name="Apweiler R."/>
            <person name="Aturaliya R.N."/>
            <person name="Bailey T.L."/>
            <person name="Bansal M."/>
            <person name="Baxter L."/>
            <person name="Beisel K.W."/>
            <person name="Bersano T."/>
            <person name="Bono H."/>
            <person name="Chalk A.M."/>
            <person name="Chiu K.P."/>
            <person name="Choudhary V."/>
            <person name="Christoffels A."/>
            <person name="Clutterbuck D.R."/>
            <person name="Crowe M.L."/>
            <person name="Dalla E."/>
            <person name="Dalrymple B.P."/>
            <person name="de Bono B."/>
            <person name="Della Gatta G."/>
            <person name="di Bernardo D."/>
            <person name="Down T."/>
            <person name="Engstrom P."/>
            <person name="Fagiolini M."/>
            <person name="Faulkner G."/>
            <person name="Fletcher C.F."/>
            <person name="Fukushima T."/>
            <person name="Furuno M."/>
            <person name="Futaki S."/>
            <person name="Gariboldi M."/>
            <person name="Georgii-Hemming P."/>
            <person name="Gingeras T.R."/>
            <person name="Gojobori T."/>
            <person name="Green R.E."/>
            <person name="Gustincich S."/>
            <person name="Harbers M."/>
            <person name="Hayashi Y."/>
            <person name="Hensch T.K."/>
            <person name="Hirokawa N."/>
            <person name="Hill D."/>
            <person name="Huminiecki L."/>
            <person name="Iacono M."/>
            <person name="Ikeo K."/>
            <person name="Iwama A."/>
            <person name="Ishikawa T."/>
            <person name="Jakt M."/>
            <person name="Kanapin A."/>
            <person name="Katoh M."/>
            <person name="Kawasawa Y."/>
            <person name="Kelso J."/>
            <person name="Kitamura H."/>
            <person name="Kitano H."/>
            <person name="Kollias G."/>
            <person name="Krishnan S.P."/>
            <person name="Kruger A."/>
            <person name="Kummerfeld S.K."/>
            <person name="Kurochkin I.V."/>
            <person name="Lareau L.F."/>
            <person name="Lazarevic D."/>
            <person name="Lipovich L."/>
            <person name="Liu J."/>
            <person name="Liuni S."/>
            <person name="McWilliam S."/>
            <person name="Madan Babu M."/>
            <person name="Madera M."/>
            <person name="Marchionni L."/>
            <person name="Matsuda H."/>
            <person name="Matsuzawa S."/>
            <person name="Miki H."/>
            <person name="Mignone F."/>
            <person name="Miyake S."/>
            <person name="Morris K."/>
            <person name="Mottagui-Tabar S."/>
            <person name="Mulder N."/>
            <person name="Nakano N."/>
            <person name="Nakauchi H."/>
            <person name="Ng P."/>
            <person name="Nilsson R."/>
            <person name="Nishiguchi S."/>
            <person name="Nishikawa S."/>
            <person name="Nori F."/>
            <person name="Ohara O."/>
            <person name="Okazaki Y."/>
            <person name="Orlando V."/>
            <person name="Pang K.C."/>
            <person name="Pavan W.J."/>
            <person name="Pavesi G."/>
            <person name="Pesole G."/>
            <person name="Petrovsky N."/>
            <person name="Piazza S."/>
            <person name="Reed J."/>
            <person name="Reid J.F."/>
            <person name="Ring B.Z."/>
            <person name="Ringwald M."/>
            <person name="Rost B."/>
            <person name="Ruan Y."/>
            <person name="Salzberg S.L."/>
            <person name="Sandelin A."/>
            <person name="Schneider C."/>
            <person name="Schoenbach C."/>
            <person name="Sekiguchi K."/>
            <person name="Semple C.A."/>
            <person name="Seno S."/>
            <person name="Sessa L."/>
            <person name="Sheng Y."/>
            <person name="Shibata Y."/>
            <person name="Shimada H."/>
            <person name="Shimada K."/>
            <person name="Silva D."/>
            <person name="Sinclair B."/>
            <person name="Sperling S."/>
            <person name="Stupka E."/>
            <person name="Sugiura K."/>
            <person name="Sultana R."/>
            <person name="Takenaka Y."/>
            <person name="Taki K."/>
            <person name="Tammoja K."/>
            <person name="Tan S.L."/>
            <person name="Tang S."/>
            <person name="Taylor M.S."/>
            <person name="Tegner J."/>
            <person name="Teichmann S.A."/>
            <person name="Ueda H.R."/>
            <person name="van Nimwegen E."/>
            <person name="Verardo R."/>
            <person name="Wei C.L."/>
            <person name="Yagi K."/>
            <person name="Yamanishi H."/>
            <person name="Zabarovsky E."/>
            <person name="Zhu S."/>
            <person name="Zimmer A."/>
            <person name="Hide W."/>
            <person name="Bult C."/>
            <person name="Grimmond S.M."/>
            <person name="Teasdale R.D."/>
            <person name="Liu E.T."/>
            <person name="Brusic V."/>
            <person name="Quackenbush J."/>
            <person name="Wahlestedt C."/>
            <person name="Mattick J.S."/>
            <person name="Hume D.A."/>
            <person name="Kai C."/>
            <person name="Sasaki D."/>
            <person name="Tomaru Y."/>
            <person name="Fukuda S."/>
            <person name="Kanamori-Katayama M."/>
            <person name="Suzuki M."/>
            <person name="Aoki J."/>
            <person name="Arakawa T."/>
            <person name="Iida J."/>
            <person name="Imamura K."/>
            <person name="Itoh M."/>
            <person name="Kato T."/>
            <person name="Kawaji H."/>
            <person name="Kawagashira N."/>
            <person name="Kawashima T."/>
            <person name="Kojima M."/>
            <person name="Kondo S."/>
            <person name="Konno H."/>
            <person name="Nakano K."/>
            <person name="Ninomiya N."/>
            <person name="Nishio T."/>
            <person name="Okada M."/>
            <person name="Plessy C."/>
            <person name="Shibata K."/>
            <person name="Shiraki T."/>
            <person name="Suzuki S."/>
            <person name="Tagami M."/>
            <person name="Waki K."/>
            <person name="Watahiki A."/>
            <person name="Okamura-Oho Y."/>
            <person name="Suzuki H."/>
            <person name="Kawai J."/>
            <person name="Hayashizaki Y."/>
        </authorList>
    </citation>
    <scope>NUCLEOTIDE SEQUENCE [LARGE SCALE MRNA] OF 1-703 (ISOFORM 3)</scope>
    <source>
        <strain>NOD</strain>
    </source>
</reference>
<reference key="2">
    <citation type="journal article" date="2001" name="EMBO J.">
        <title>NoRC -- a novel member of mammalian ISWI-containing chromatin remodeling machines.</title>
        <authorList>
            <person name="Strohner R."/>
            <person name="Nemeth A."/>
            <person name="Jansa P."/>
            <person name="Hofmann-Rohrer U."/>
            <person name="Santoro R."/>
            <person name="Laengst G."/>
            <person name="Grummt I."/>
        </authorList>
    </citation>
    <scope>NUCLEOTIDE SEQUENCE [MRNA] OF 40-1889 (ISOFORM 1)</scope>
    <scope>FUNCTION</scope>
    <scope>IDENTIFICATION IN THE NORC-5 ISWI CHROMATIN REMODELING COMPLEX</scope>
    <scope>INTERACTION WITH SMARCA5 AND TTF1</scope>
    <scope>SUBCELLULAR LOCATION</scope>
</reference>
<reference key="3">
    <citation type="journal article" date="2003" name="DNA Res.">
        <title>Prediction of the coding sequences of mouse homologues of KIAA gene: II. The complete nucleotide sequences of 400 mouse KIAA-homologous cDNAs identified by screening of terminal sequences of cDNA clones randomly sampled from size-fractionated libraries.</title>
        <authorList>
            <person name="Okazaki N."/>
            <person name="Kikuno R."/>
            <person name="Ohara R."/>
            <person name="Inamoto S."/>
            <person name="Aizawa H."/>
            <person name="Yuasa S."/>
            <person name="Nakajima D."/>
            <person name="Nagase T."/>
            <person name="Ohara O."/>
            <person name="Koga H."/>
        </authorList>
    </citation>
    <scope>NUCLEOTIDE SEQUENCE [LARGE SCALE MRNA] OF 1003-1889 (ISOFORM 2)</scope>
    <source>
        <tissue>Brain</tissue>
    </source>
</reference>
<reference key="4">
    <citation type="journal article" date="2002" name="EMBO J.">
        <title>The chromatin remodeling complex NoRC targets HDAC1 to the ribosomal gene promoter and represses RNA polymerase I transcription.</title>
        <authorList>
            <person name="Zhou Y."/>
            <person name="Santoro R."/>
            <person name="Grummt I."/>
        </authorList>
    </citation>
    <scope>FUNCTION</scope>
    <scope>SUBCELLULAR LOCATION</scope>
    <scope>INTERACTION WITH HDAC1 AND SIN3A</scope>
    <scope>MUTAGENESIS OF TYR-1814</scope>
</reference>
<reference key="5">
    <citation type="journal article" date="2004" name="Nucleic Acids Res.">
        <title>The chromatin remodeling complex NoRC and TTF-I cooperate in the regulation of the mammalian rRNA genes in vivo.</title>
        <authorList>
            <person name="Nemeth A."/>
            <person name="Strohner R."/>
            <person name="Grummt I."/>
            <person name="Laengst G."/>
        </authorList>
    </citation>
    <scope>INTERACTION WITH TTF1</scope>
</reference>
<reference key="6">
    <citation type="journal article" date="2005" name="Curr. Biol.">
        <title>The PHD finger/bromodomain of NoRC interacts with acetylated histone H4K16 and is sufficient for rDNA silencing.</title>
        <authorList>
            <person name="Zhou Y."/>
            <person name="Grummt I."/>
        </authorList>
    </citation>
    <scope>FUNCTION</scope>
    <scope>SUBCELLULAR LOCATION</scope>
    <scope>DOMAIN</scope>
    <scope>INTERACTION WITH DNMT1; DNM3B; HDAC1 AND SMARCA5</scope>
</reference>
<reference key="7">
    <citation type="journal article" date="2006" name="Mol. Cell">
        <title>Intergenic transcripts regulate the epigenetic state of rRNA genes.</title>
        <authorList>
            <person name="Mayer C."/>
            <person name="Schmitz K.-M."/>
            <person name="Li J."/>
            <person name="Grummt I."/>
            <person name="Santoro R."/>
        </authorList>
    </citation>
    <scope>FUNCTION</scope>
    <scope>RNA-BINDING</scope>
    <scope>DOMAIN</scope>
    <scope>MUTAGENESIS OF 570-TRP-TYR-571</scope>
</reference>
<reference key="8">
    <citation type="journal article" date="2007" name="Proc. Natl. Acad. Sci. U.S.A.">
        <title>Large-scale phosphorylation analysis of mouse liver.</title>
        <authorList>
            <person name="Villen J."/>
            <person name="Beausoleil S.A."/>
            <person name="Gerber S.A."/>
            <person name="Gygi S.P."/>
        </authorList>
    </citation>
    <scope>IDENTIFICATION BY MASS SPECTROMETRY [LARGE SCALE ANALYSIS]</scope>
    <source>
        <tissue>Liver</tissue>
    </source>
</reference>
<reference key="9">
    <citation type="journal article" date="2008" name="EMBO Rep.">
        <title>The structure of NoRC-associated RNA is crucial for targeting the chromatin remodelling complex NoRC to the nucleolus.</title>
        <authorList>
            <person name="Mayer C."/>
            <person name="Neubert M."/>
            <person name="Grummt I."/>
        </authorList>
    </citation>
    <scope>FUNCTION</scope>
    <scope>RNA-BINDING</scope>
    <scope>SUBCELLULAR LOCATION</scope>
</reference>
<reference key="10">
    <citation type="journal article" date="2009" name="Nat. Cell Biol.">
        <title>Reversible acetylation of the chromatin remodelling complex NoRC is required for non-coding RNA-dependent silencing.</title>
        <authorList>
            <person name="Zhou Y."/>
            <person name="Schmitz K.M."/>
            <person name="Mayer C."/>
            <person name="Yuan X."/>
            <person name="Akhtar A."/>
            <person name="Grummt I."/>
        </authorList>
    </citation>
    <scope>ACETYLATION AT LYS-672</scope>
    <scope>RNA-BINDING</scope>
    <scope>SUBCELLULAR LOCATION</scope>
    <scope>MUTAGENESIS OF 570-TRP-TYR-571 AND LYS-672</scope>
</reference>
<reference key="11">
    <citation type="journal article" date="2010" name="Cell">
        <title>A tissue-specific atlas of mouse protein phosphorylation and expression.</title>
        <authorList>
            <person name="Huttlin E.L."/>
            <person name="Jedrychowski M.P."/>
            <person name="Elias J.E."/>
            <person name="Goswami T."/>
            <person name="Rad R."/>
            <person name="Beausoleil S.A."/>
            <person name="Villen J."/>
            <person name="Haas W."/>
            <person name="Sowa M.E."/>
            <person name="Gygi S.P."/>
        </authorList>
    </citation>
    <scope>PHOSPHORYLATION [LARGE SCALE ANALYSIS] AT SER-1042; SER-1174; SER-1374; SER-1377; SER-1383 AND THR-1738</scope>
    <scope>IDENTIFICATION BY MASS SPECTROMETRY [LARGE SCALE ANALYSIS]</scope>
    <source>
        <tissue>Brown adipose tissue</tissue>
        <tissue>Kidney</tissue>
        <tissue>Lung</tissue>
        <tissue>Pancreas</tissue>
        <tissue>Spleen</tissue>
        <tissue>Testis</tissue>
    </source>
</reference>
<reference key="12">
    <citation type="journal article" date="2013" name="Mol. Cell">
        <title>SIRT5-mediated lysine desuccinylation impacts diverse metabolic pathways.</title>
        <authorList>
            <person name="Park J."/>
            <person name="Chen Y."/>
            <person name="Tishkoff D.X."/>
            <person name="Peng C."/>
            <person name="Tan M."/>
            <person name="Dai L."/>
            <person name="Xie Z."/>
            <person name="Zhang Y."/>
            <person name="Zwaans B.M."/>
            <person name="Skinner M.E."/>
            <person name="Lombard D.B."/>
            <person name="Zhao Y."/>
        </authorList>
    </citation>
    <scope>ACETYLATION [LARGE SCALE ANALYSIS] AT LYS-790</scope>
    <scope>IDENTIFICATION BY MASS SPECTROMETRY [LARGE SCALE ANALYSIS]</scope>
    <source>
        <tissue>Embryonic fibroblast</tissue>
    </source>
</reference>
<feature type="chain" id="PRO_0000211173" description="Bromodomain adjacent to zinc finger domain protein 2A">
    <location>
        <begin position="1"/>
        <end position="1889"/>
    </location>
</feature>
<feature type="domain" description="MBD" evidence="6">
    <location>
        <begin position="538"/>
        <end position="609"/>
    </location>
</feature>
<feature type="domain" description="DDT" evidence="4">
    <location>
        <begin position="839"/>
        <end position="904"/>
    </location>
</feature>
<feature type="domain" description="Bromo" evidence="3">
    <location>
        <begin position="1777"/>
        <end position="1881"/>
    </location>
</feature>
<feature type="DNA-binding region" description="A.T hook 1">
    <location>
        <begin position="641"/>
        <end position="653"/>
    </location>
</feature>
<feature type="DNA-binding region" description="A.T hook 2">
    <location>
        <begin position="662"/>
        <end position="674"/>
    </location>
</feature>
<feature type="DNA-binding region" description="A.T hook 3">
    <location>
        <begin position="1176"/>
        <end position="1188"/>
    </location>
</feature>
<feature type="DNA-binding region" description="A.T hook 4">
    <location>
        <begin position="1390"/>
        <end position="1402"/>
    </location>
</feature>
<feature type="zinc finger region" description="PHD-type" evidence="5">
    <location>
        <begin position="1662"/>
        <end position="1712"/>
    </location>
</feature>
<feature type="region of interest" description="Disordered" evidence="7">
    <location>
        <begin position="1"/>
        <end position="59"/>
    </location>
</feature>
<feature type="region of interest" description="Required for TTF1 binding" evidence="8">
    <location>
        <begin position="332"/>
        <end position="726"/>
    </location>
</feature>
<feature type="region of interest" description="Disordered" evidence="7">
    <location>
        <begin position="384"/>
        <end position="433"/>
    </location>
</feature>
<feature type="region of interest" description="Disordered" evidence="7">
    <location>
        <begin position="479"/>
        <end position="526"/>
    </location>
</feature>
<feature type="region of interest" description="Disordered" evidence="7">
    <location>
        <begin position="638"/>
        <end position="791"/>
    </location>
</feature>
<feature type="region of interest" description="Disordered" evidence="7">
    <location>
        <begin position="1039"/>
        <end position="1063"/>
    </location>
</feature>
<feature type="region of interest" description="Disordered" evidence="7">
    <location>
        <begin position="1147"/>
        <end position="1247"/>
    </location>
</feature>
<feature type="region of interest" description="Disordered" evidence="7">
    <location>
        <begin position="1269"/>
        <end position="1397"/>
    </location>
</feature>
<feature type="region of interest" description="Disordered" evidence="7">
    <location>
        <begin position="1720"/>
        <end position="1778"/>
    </location>
</feature>
<feature type="coiled-coil region" evidence="2">
    <location>
        <begin position="686"/>
        <end position="813"/>
    </location>
</feature>
<feature type="compositionally biased region" description="Polar residues" evidence="7">
    <location>
        <begin position="35"/>
        <end position="59"/>
    </location>
</feature>
<feature type="compositionally biased region" description="Low complexity" evidence="7">
    <location>
        <begin position="423"/>
        <end position="433"/>
    </location>
</feature>
<feature type="compositionally biased region" description="Polar residues" evidence="7">
    <location>
        <begin position="479"/>
        <end position="489"/>
    </location>
</feature>
<feature type="compositionally biased region" description="Polar residues" evidence="7">
    <location>
        <begin position="498"/>
        <end position="509"/>
    </location>
</feature>
<feature type="compositionally biased region" description="Basic and acidic residues" evidence="7">
    <location>
        <begin position="648"/>
        <end position="660"/>
    </location>
</feature>
<feature type="compositionally biased region" description="Basic residues" evidence="7">
    <location>
        <begin position="661"/>
        <end position="670"/>
    </location>
</feature>
<feature type="compositionally biased region" description="Basic and acidic residues" evidence="7">
    <location>
        <begin position="678"/>
        <end position="701"/>
    </location>
</feature>
<feature type="compositionally biased region" description="Basic residues" evidence="7">
    <location>
        <begin position="702"/>
        <end position="713"/>
    </location>
</feature>
<feature type="compositionally biased region" description="Polar residues" evidence="7">
    <location>
        <begin position="716"/>
        <end position="726"/>
    </location>
</feature>
<feature type="compositionally biased region" description="Basic and acidic residues" evidence="7">
    <location>
        <begin position="731"/>
        <end position="740"/>
    </location>
</feature>
<feature type="compositionally biased region" description="Basic and acidic residues" evidence="7">
    <location>
        <begin position="748"/>
        <end position="791"/>
    </location>
</feature>
<feature type="compositionally biased region" description="Acidic residues" evidence="7">
    <location>
        <begin position="1042"/>
        <end position="1052"/>
    </location>
</feature>
<feature type="compositionally biased region" description="Polar residues" evidence="7">
    <location>
        <begin position="1190"/>
        <end position="1231"/>
    </location>
</feature>
<feature type="compositionally biased region" description="Polar residues" evidence="7">
    <location>
        <begin position="1269"/>
        <end position="1278"/>
    </location>
</feature>
<feature type="compositionally biased region" description="Polar residues" evidence="7">
    <location>
        <begin position="1331"/>
        <end position="1346"/>
    </location>
</feature>
<feature type="compositionally biased region" description="Basic and acidic residues" evidence="7">
    <location>
        <begin position="1742"/>
        <end position="1754"/>
    </location>
</feature>
<feature type="compositionally biased region" description="Basic residues" evidence="7">
    <location>
        <begin position="1769"/>
        <end position="1778"/>
    </location>
</feature>
<feature type="modified residue" description="Phosphothreonine" evidence="1">
    <location>
        <position position="499"/>
    </location>
</feature>
<feature type="modified residue" description="Phosphoserine" evidence="1">
    <location>
        <position position="501"/>
    </location>
</feature>
<feature type="modified residue" description="Phosphothreonine" evidence="1">
    <location>
        <position position="540"/>
    </location>
</feature>
<feature type="modified residue" description="Phosphoserine" evidence="1">
    <location>
        <position position="605"/>
    </location>
</feature>
<feature type="modified residue" description="N6-acetyllysine; by KAT8" evidence="14">
    <location>
        <position position="672"/>
    </location>
</feature>
<feature type="modified residue" description="N6-acetyllysine" evidence="19">
    <location>
        <position position="790"/>
    </location>
</feature>
<feature type="modified residue" description="Phosphoserine" evidence="18">
    <location>
        <position position="1042"/>
    </location>
</feature>
<feature type="modified residue" description="Phosphoserine" evidence="18">
    <location>
        <position position="1174"/>
    </location>
</feature>
<feature type="modified residue" description="Phosphoserine" evidence="18">
    <location>
        <position position="1374"/>
    </location>
</feature>
<feature type="modified residue" description="Phosphoserine" evidence="18">
    <location>
        <position position="1377"/>
    </location>
</feature>
<feature type="modified residue" description="Phosphoserine" evidence="18">
    <location>
        <position position="1383"/>
    </location>
</feature>
<feature type="modified residue" description="Phosphoserine" evidence="1">
    <location>
        <position position="1545"/>
    </location>
</feature>
<feature type="modified residue" description="Phosphoserine" evidence="1">
    <location>
        <position position="1733"/>
    </location>
</feature>
<feature type="modified residue" description="Phosphothreonine" evidence="18">
    <location>
        <position position="1738"/>
    </location>
</feature>
<feature type="modified residue" description="Phosphoserine" evidence="1">
    <location>
        <position position="1755"/>
    </location>
</feature>
<feature type="modified residue" description="Phosphoserine" evidence="1">
    <location>
        <position position="1767"/>
    </location>
</feature>
<feature type="cross-link" description="Glycyl lysine isopeptide (Lys-Gly) (interchain with G-Cter in SUMO2)" evidence="1">
    <location>
        <position position="857"/>
    </location>
</feature>
<feature type="cross-link" description="Glycyl lysine isopeptide (Lys-Gly) (interchain with G-Cter in SUMO2)" evidence="1">
    <location>
        <position position="1141"/>
    </location>
</feature>
<feature type="cross-link" description="Glycyl lysine isopeptide (Lys-Gly) (interchain with G-Cter in SUMO2)" evidence="1">
    <location>
        <position position="1163"/>
    </location>
</feature>
<feature type="cross-link" description="Glycyl lysine isopeptide (Lys-Gly) (interchain with G-Cter in SUMO2)" evidence="1">
    <location>
        <position position="1662"/>
    </location>
</feature>
<feature type="cross-link" description="Glycyl lysine isopeptide (Lys-Gly) (interchain with G-Cter in SUMO2)" evidence="1">
    <location>
        <position position="1695"/>
    </location>
</feature>
<feature type="splice variant" id="VSP_037962" description="In isoform 3." evidence="16">
    <original>L</original>
    <variation>LA</variation>
    <location>
        <position position="305"/>
    </location>
</feature>
<feature type="splice variant" id="VSP_037963" description="In isoform 2." evidence="15">
    <location>
        <position position="1712"/>
    </location>
</feature>
<feature type="mutagenesis site" description="Impairs interaction with pRNA and heterochromatin formation but retains ability to trigger DNA methylation and silence rDNA transcription." evidence="12 14">
    <original>WY</original>
    <variation>GA</variation>
    <location>
        <begin position="570"/>
        <end position="571"/>
    </location>
</feature>
<feature type="mutagenesis site" description="Abolishes acetylation by KAT8/MOF, leading to increase interaction with TTF1 and association with pRNA." evidence="14">
    <original>K</original>
    <variation>R</variation>
    <location>
        <position position="672"/>
    </location>
</feature>
<feature type="mutagenesis site" description="Impairs binding to chromatin." evidence="9">
    <original>Y</original>
    <variation>F</variation>
    <location>
        <position position="1814"/>
    </location>
</feature>
<feature type="sequence conflict" description="In Ref. 1; CAC69992." evidence="17" ref="1">
    <original>NF</original>
    <variation>SL</variation>
    <location>
        <begin position="41"/>
        <end position="42"/>
    </location>
</feature>
<proteinExistence type="evidence at protein level"/>
<protein>
    <recommendedName>
        <fullName>Bromodomain adjacent to zinc finger domain protein 2A</fullName>
    </recommendedName>
    <alternativeName>
        <fullName>Transcription termination factor I-interacting protein 5</fullName>
        <shortName>TTF-I-interacting protein 5</shortName>
        <shortName>Tip5</shortName>
    </alternativeName>
</protein>
<keyword id="KW-0007">Acetylation</keyword>
<keyword id="KW-0025">Alternative splicing</keyword>
<keyword id="KW-0103">Bromodomain</keyword>
<keyword id="KW-0156">Chromatin regulator</keyword>
<keyword id="KW-0175">Coiled coil</keyword>
<keyword id="KW-0238">DNA-binding</keyword>
<keyword id="KW-1017">Isopeptide bond</keyword>
<keyword id="KW-0479">Metal-binding</keyword>
<keyword id="KW-0539">Nucleus</keyword>
<keyword id="KW-0597">Phosphoprotein</keyword>
<keyword id="KW-1185">Reference proteome</keyword>
<keyword id="KW-0677">Repeat</keyword>
<keyword id="KW-0678">Repressor</keyword>
<keyword id="KW-0694">RNA-binding</keyword>
<keyword id="KW-0804">Transcription</keyword>
<keyword id="KW-0805">Transcription regulation</keyword>
<keyword id="KW-0832">Ubl conjugation</keyword>
<keyword id="KW-0862">Zinc</keyword>
<keyword id="KW-0863">Zinc-finger</keyword>
<organism>
    <name type="scientific">Mus musculus</name>
    <name type="common">Mouse</name>
    <dbReference type="NCBI Taxonomy" id="10090"/>
    <lineage>
        <taxon>Eukaryota</taxon>
        <taxon>Metazoa</taxon>
        <taxon>Chordata</taxon>
        <taxon>Craniata</taxon>
        <taxon>Vertebrata</taxon>
        <taxon>Euteleostomi</taxon>
        <taxon>Mammalia</taxon>
        <taxon>Eutheria</taxon>
        <taxon>Euarchontoglires</taxon>
        <taxon>Glires</taxon>
        <taxon>Rodentia</taxon>
        <taxon>Myomorpha</taxon>
        <taxon>Muroidea</taxon>
        <taxon>Muridae</taxon>
        <taxon>Murinae</taxon>
        <taxon>Mus</taxon>
        <taxon>Mus</taxon>
    </lineage>
</organism>
<gene>
    <name type="primary">Baz2a</name>
    <name type="synonym">Kiaa0314</name>
    <name type="synonym">Tip5</name>
</gene>
<accession>Q91YE5</accession>
<accession>Q3U235</accession>
<accession>Q80U42</accession>
<comment type="function">
    <text evidence="1 8 9 11 12 13">Regulatory subunit of the ATP-dependent NoRC-1 and NoRC-5 ISWI chromatin remodeling complexes, which form ordered nucleosome arrays on chromatin and facilitate access to DNA during DNA-templated processes such as DNA replication, transcription, and repair (PubMed:11532953). Both complexes regulate the spacing of nucleosomes along the chromatin and have the ability to slide mononucleosomes to the center of a DNA template (PubMed:11532953). Directly stimulates the ATPase activity of SMARCA5 in the NoRC-5 ISWI chromatin remodeling complex (By similarity). The NoRC-1 ISWI chromatin remodeling complex has a lower ATP hydrolysis rate than the NoRC-5 ISWI chromatin remodeling complex (By similarity). Within the NoRC-5 ISWI chromatin remodeling complex, mediates silencing of a fraction of rDNA by recruiting histone-modifying enzymes and DNA methyltransferases, leading to heterochromatin formation and transcriptional silencing (PubMed:11532953). In the complex, it plays a central role by being recruited to rDNA and by targeting chromatin modifying enzymes such as HDAC1, leading to repress RNA polymerase I transcription (PubMed:12198165, PubMed:16085498). Recruited to rDNA via its interaction with TTF1 and its ability to recognize and bind histone H4 acetylated on 'Lys-16' (H4K16ac), leading to deacetylation of H4K5ac, H4K8ac, H4K12ac but not H4K16ac (PubMed:11532953, PubMed:16085498). Specifically binds pRNAs, 150-250 nucleotide RNAs that are complementary in sequence to the rDNA promoter; pRNA-binding is required for heterochromatin formation and rDNA silencing (PubMed:16678107, PubMed:18600236).</text>
</comment>
<comment type="subunit">
    <text evidence="1 8 9 10 11">Component of the NoRC-1 ISWI chromatin remodeling complex at least composed of SMARCA1 and BAZ2A/TIP5, which regulates the spacing of histone octamers on the DNA template to facilitate access to DNA (By similarity). Within the NoRC-1 ISWI chromatin remodeling complex interacts with SMARCA1; the interaction is direct (By similarity). Component of the NoRC-5 ISWI chromatin remodeling complex (also called the NoRC nucleolar-remodeling complex), at least composed of SMARCA5/SNF2H and BAZ2A/TIP5, which regulates the spacing of histone octamers on the DNA template to facilitate access to DNA (PubMed:11532953). Within the NoRC-5 ISWI chromatin remodeling complexes interacts with SMARCA5/SNF2H; the interaction is direct (PubMed:11532953, PubMed:16085498). Interacts with TTF1; the interaction is required for recruitment of the NoRC-5 ISWI chromatin remodeling complex to rDNA (PubMed:11532953, PubMed:15292447). Interacts with HDAC1 (PubMed:12198165, PubMed:16085498). Interacts with SIN3A (PubMed:12198165). Interacts with DNMT1 and DNM3B (PubMed:16085498). Interacts with BEND3 and USP21 (By similarity).</text>
</comment>
<comment type="subcellular location">
    <subcellularLocation>
        <location evidence="8 9 11 13 14">Nucleus</location>
        <location evidence="8 9 11 13 14">Nucleolus</location>
    </subcellularLocation>
    <text evidence="8">Co-localizes with the basal RNA polymerase I transcription factor UBF in the nucleolus.</text>
</comment>
<comment type="alternative products">
    <event type="alternative splicing"/>
    <isoform>
        <id>Q91YE5-1</id>
        <name>1</name>
        <sequence type="displayed"/>
    </isoform>
    <isoform>
        <id>Q91YE5-2</id>
        <name>2</name>
        <sequence type="described" ref="VSP_037963"/>
    </isoform>
    <isoform>
        <id>Q91YE5-3</id>
        <name>3</name>
        <sequence type="described" ref="VSP_037962"/>
    </isoform>
</comment>
<comment type="domain">
    <text evidence="11">The bromo domain and the PHD-type zinc finger recognize and bind histone H4 acetylated on 'Lys-16' (H4K16ac). These 2 domains play a central role in the recruitment of chromatin silencing proteins such as DNMT1, DNMT3B and HDAC1.</text>
</comment>
<comment type="domain">
    <text evidence="12">The MBD (methyl-CpG-binding) domain, also named TAM domain, specifically recognizes and binds a conserved stem-loop structure the association within pRNA. Binding to pRNA induces a conformational change of BAZ2A/TIP5 and is essential for targeting the NoRC complex to the nucleolus.</text>
</comment>
<comment type="PTM">
    <text evidence="1">Ubiquitinated. Deubiquitinated by USP21 leading to its stabilization.</text>
</comment>
<comment type="PTM">
    <text evidence="14">Acetylation at Lys-672 by KAT8/MOF promotes its dissociation from pRNA, affecting heterochromatin formation, nucleosome positioning and rDNA silencing. Deacetylation by SIRT1 in late S phase enhances pRNA-binding, allowing de novo DNA methylation and heterochromatin formation. Acetylation is high during S phase and declines to background levels in late S phase when the silent copies of rRNA genes are replicated.</text>
</comment>
<comment type="similarity">
    <text evidence="17">Belongs to the WAL family.</text>
</comment>
<evidence type="ECO:0000250" key="1">
    <source>
        <dbReference type="UniProtKB" id="Q9UIF9"/>
    </source>
</evidence>
<evidence type="ECO:0000255" key="2"/>
<evidence type="ECO:0000255" key="3">
    <source>
        <dbReference type="PROSITE-ProRule" id="PRU00035"/>
    </source>
</evidence>
<evidence type="ECO:0000255" key="4">
    <source>
        <dbReference type="PROSITE-ProRule" id="PRU00063"/>
    </source>
</evidence>
<evidence type="ECO:0000255" key="5">
    <source>
        <dbReference type="PROSITE-ProRule" id="PRU00146"/>
    </source>
</evidence>
<evidence type="ECO:0000255" key="6">
    <source>
        <dbReference type="PROSITE-ProRule" id="PRU00338"/>
    </source>
</evidence>
<evidence type="ECO:0000256" key="7">
    <source>
        <dbReference type="SAM" id="MobiDB-lite"/>
    </source>
</evidence>
<evidence type="ECO:0000269" key="8">
    <source>
    </source>
</evidence>
<evidence type="ECO:0000269" key="9">
    <source>
    </source>
</evidence>
<evidence type="ECO:0000269" key="10">
    <source>
    </source>
</evidence>
<evidence type="ECO:0000269" key="11">
    <source>
    </source>
</evidence>
<evidence type="ECO:0000269" key="12">
    <source>
    </source>
</evidence>
<evidence type="ECO:0000269" key="13">
    <source>
    </source>
</evidence>
<evidence type="ECO:0000269" key="14">
    <source>
    </source>
</evidence>
<evidence type="ECO:0000303" key="15">
    <source>
    </source>
</evidence>
<evidence type="ECO:0000303" key="16">
    <source>
    </source>
</evidence>
<evidence type="ECO:0000305" key="17"/>
<evidence type="ECO:0007744" key="18">
    <source>
    </source>
</evidence>
<evidence type="ECO:0007744" key="19">
    <source>
    </source>
</evidence>
<dbReference type="EMBL" id="AK155523">
    <property type="protein sequence ID" value="BAE33307.1"/>
    <property type="molecule type" value="mRNA"/>
</dbReference>
<dbReference type="EMBL" id="AJ309544">
    <property type="protein sequence ID" value="CAC69992.1"/>
    <property type="molecule type" value="mRNA"/>
</dbReference>
<dbReference type="EMBL" id="AK122243">
    <property type="protein sequence ID" value="BAC65525.1"/>
    <property type="molecule type" value="mRNA"/>
</dbReference>
<dbReference type="BMRB" id="Q91YE5"/>
<dbReference type="SMR" id="Q91YE5"/>
<dbReference type="ComplexPortal" id="CPX-424">
    <property type="entry name" value="NoRC chromatin remodelling complex"/>
</dbReference>
<dbReference type="CORUM" id="Q91YE5"/>
<dbReference type="FunCoup" id="Q91YE5">
    <property type="interactions" value="3098"/>
</dbReference>
<dbReference type="IntAct" id="Q91YE5">
    <property type="interactions" value="1"/>
</dbReference>
<dbReference type="STRING" id="10090.ENSMUSP00000151961"/>
<dbReference type="GlyGen" id="Q91YE5">
    <property type="glycosylation" value="4 sites"/>
</dbReference>
<dbReference type="iPTMnet" id="Q91YE5"/>
<dbReference type="PhosphoSitePlus" id="Q91YE5"/>
<dbReference type="jPOST" id="Q91YE5"/>
<dbReference type="PaxDb" id="10090-ENSMUSP00000129803"/>
<dbReference type="ProteomicsDB" id="273542">
    <molecule id="Q91YE5-1"/>
</dbReference>
<dbReference type="ProteomicsDB" id="273543">
    <molecule id="Q91YE5-2"/>
</dbReference>
<dbReference type="ProteomicsDB" id="273544">
    <molecule id="Q91YE5-3"/>
</dbReference>
<dbReference type="AGR" id="MGI:2151152"/>
<dbReference type="MGI" id="MGI:2151152">
    <property type="gene designation" value="Baz2a"/>
</dbReference>
<dbReference type="eggNOG" id="KOG1245">
    <property type="taxonomic scope" value="Eukaryota"/>
</dbReference>
<dbReference type="InParanoid" id="Q91YE5"/>
<dbReference type="PhylomeDB" id="Q91YE5"/>
<dbReference type="ChiTaRS" id="Baz2a">
    <property type="organism name" value="mouse"/>
</dbReference>
<dbReference type="PRO" id="PR:Q91YE5"/>
<dbReference type="Proteomes" id="UP000000589">
    <property type="component" value="Unplaced"/>
</dbReference>
<dbReference type="RNAct" id="Q91YE5">
    <property type="molecule type" value="protein"/>
</dbReference>
<dbReference type="GO" id="GO:0005677">
    <property type="term" value="C:chromatin silencing complex"/>
    <property type="evidence" value="ECO:0000314"/>
    <property type="project" value="UniProtKB"/>
</dbReference>
<dbReference type="GO" id="GO:0090536">
    <property type="term" value="C:NoRC complex"/>
    <property type="evidence" value="ECO:0000353"/>
    <property type="project" value="ComplexPortal"/>
</dbReference>
<dbReference type="GO" id="GO:0005730">
    <property type="term" value="C:nucleolus"/>
    <property type="evidence" value="ECO:0000314"/>
    <property type="project" value="UniProtKB"/>
</dbReference>
<dbReference type="GO" id="GO:0005654">
    <property type="term" value="C:nucleoplasm"/>
    <property type="evidence" value="ECO:0000304"/>
    <property type="project" value="Reactome"/>
</dbReference>
<dbReference type="GO" id="GO:0033553">
    <property type="term" value="C:rDNA heterochromatin"/>
    <property type="evidence" value="ECO:0000314"/>
    <property type="project" value="UniProtKB"/>
</dbReference>
<dbReference type="GO" id="GO:0140463">
    <property type="term" value="F:chromatin-protein adaptor activity"/>
    <property type="evidence" value="ECO:0000314"/>
    <property type="project" value="GO_Central"/>
</dbReference>
<dbReference type="GO" id="GO:0003677">
    <property type="term" value="F:DNA binding"/>
    <property type="evidence" value="ECO:0000314"/>
    <property type="project" value="MGI"/>
</dbReference>
<dbReference type="GO" id="GO:0140046">
    <property type="term" value="F:histone H4K16ac reader activity"/>
    <property type="evidence" value="ECO:0000314"/>
    <property type="project" value="UniProtKB"/>
</dbReference>
<dbReference type="GO" id="GO:0003723">
    <property type="term" value="F:RNA binding"/>
    <property type="evidence" value="ECO:0000314"/>
    <property type="project" value="UniProtKB"/>
</dbReference>
<dbReference type="GO" id="GO:0008270">
    <property type="term" value="F:zinc ion binding"/>
    <property type="evidence" value="ECO:0007669"/>
    <property type="project" value="UniProtKB-KW"/>
</dbReference>
<dbReference type="GO" id="GO:0006338">
    <property type="term" value="P:chromatin remodeling"/>
    <property type="evidence" value="ECO:0000316"/>
    <property type="project" value="MGI"/>
</dbReference>
<dbReference type="GO" id="GO:0006346">
    <property type="term" value="P:DNA methylation-dependent constitutive heterochromatin formation"/>
    <property type="evidence" value="ECO:0000314"/>
    <property type="project" value="ComplexPortal"/>
</dbReference>
<dbReference type="GO" id="GO:0031507">
    <property type="term" value="P:heterochromatin formation"/>
    <property type="evidence" value="ECO:0000314"/>
    <property type="project" value="ComplexPortal"/>
</dbReference>
<dbReference type="GO" id="GO:0016479">
    <property type="term" value="P:negative regulation of transcription by RNA polymerase I"/>
    <property type="evidence" value="ECO:0000314"/>
    <property type="project" value="ComplexPortal"/>
</dbReference>
<dbReference type="GO" id="GO:0000183">
    <property type="term" value="P:rDNA heterochromatin formation"/>
    <property type="evidence" value="ECO:0000314"/>
    <property type="project" value="UniProtKB"/>
</dbReference>
<dbReference type="CDD" id="cd05503">
    <property type="entry name" value="Bromo_BAZ2A_B_like"/>
    <property type="match status" value="1"/>
</dbReference>
<dbReference type="CDD" id="cd01397">
    <property type="entry name" value="HAT_MBD"/>
    <property type="match status" value="1"/>
</dbReference>
<dbReference type="CDD" id="cd15629">
    <property type="entry name" value="PHD_BAZ2A"/>
    <property type="match status" value="1"/>
</dbReference>
<dbReference type="FunFam" id="3.30.40.10:FF:000255">
    <property type="entry name" value="Bromodomain adjacent to zinc finger domain protein 2A"/>
    <property type="match status" value="1"/>
</dbReference>
<dbReference type="FunFam" id="1.20.920.10:FF:000023">
    <property type="entry name" value="Bromodomain adjacent to zinc finger domain protein 2B"/>
    <property type="match status" value="1"/>
</dbReference>
<dbReference type="FunFam" id="3.30.890.10:FF:000002">
    <property type="entry name" value="Bromodomain adjacent to zinc finger domain protein 2B"/>
    <property type="match status" value="1"/>
</dbReference>
<dbReference type="Gene3D" id="1.20.920.10">
    <property type="entry name" value="Bromodomain-like"/>
    <property type="match status" value="1"/>
</dbReference>
<dbReference type="Gene3D" id="3.30.890.10">
    <property type="entry name" value="Methyl-cpg-binding Protein 2, Chain A"/>
    <property type="match status" value="1"/>
</dbReference>
<dbReference type="Gene3D" id="3.30.40.10">
    <property type="entry name" value="Zinc/RING finger domain, C3HC4 (zinc finger)"/>
    <property type="match status" value="1"/>
</dbReference>
<dbReference type="InterPro" id="IPR017956">
    <property type="entry name" value="AT_hook_DNA-bd_motif"/>
</dbReference>
<dbReference type="InterPro" id="IPR037374">
    <property type="entry name" value="BAZ2A/B_Bromo"/>
</dbReference>
<dbReference type="InterPro" id="IPR001487">
    <property type="entry name" value="Bromodomain"/>
</dbReference>
<dbReference type="InterPro" id="IPR036427">
    <property type="entry name" value="Bromodomain-like_sf"/>
</dbReference>
<dbReference type="InterPro" id="IPR018359">
    <property type="entry name" value="Bromodomain_CS"/>
</dbReference>
<dbReference type="InterPro" id="IPR018501">
    <property type="entry name" value="DDT_dom"/>
</dbReference>
<dbReference type="InterPro" id="IPR016177">
    <property type="entry name" value="DNA-bd_dom_sf"/>
</dbReference>
<dbReference type="InterPro" id="IPR001739">
    <property type="entry name" value="Methyl_CpG_DNA-bd"/>
</dbReference>
<dbReference type="InterPro" id="IPR028940">
    <property type="entry name" value="PHD_BAZ2A"/>
</dbReference>
<dbReference type="InterPro" id="IPR028942">
    <property type="entry name" value="WHIM1_dom"/>
</dbReference>
<dbReference type="InterPro" id="IPR028941">
    <property type="entry name" value="WHIM2_dom"/>
</dbReference>
<dbReference type="InterPro" id="IPR011011">
    <property type="entry name" value="Znf_FYVE_PHD"/>
</dbReference>
<dbReference type="InterPro" id="IPR001965">
    <property type="entry name" value="Znf_PHD"/>
</dbReference>
<dbReference type="InterPro" id="IPR019787">
    <property type="entry name" value="Znf_PHD-finger"/>
</dbReference>
<dbReference type="InterPro" id="IPR013083">
    <property type="entry name" value="Znf_RING/FYVE/PHD"/>
</dbReference>
<dbReference type="PANTHER" id="PTHR45915:SF5">
    <property type="entry name" value="BROMODOMAIN ADJACENT TO ZINC FINGER DOMAIN PROTEIN 2A"/>
    <property type="match status" value="1"/>
</dbReference>
<dbReference type="PANTHER" id="PTHR45915">
    <property type="entry name" value="TRANSCRIPTION INTERMEDIARY FACTOR"/>
    <property type="match status" value="1"/>
</dbReference>
<dbReference type="Pfam" id="PF00439">
    <property type="entry name" value="Bromodomain"/>
    <property type="match status" value="1"/>
</dbReference>
<dbReference type="Pfam" id="PF02791">
    <property type="entry name" value="DDT"/>
    <property type="match status" value="1"/>
</dbReference>
<dbReference type="Pfam" id="PF01429">
    <property type="entry name" value="MBD"/>
    <property type="match status" value="1"/>
</dbReference>
<dbReference type="Pfam" id="PF00628">
    <property type="entry name" value="PHD"/>
    <property type="match status" value="1"/>
</dbReference>
<dbReference type="Pfam" id="PF15612">
    <property type="entry name" value="WHIM1"/>
    <property type="match status" value="1"/>
</dbReference>
<dbReference type="Pfam" id="PF15613">
    <property type="entry name" value="WSD"/>
    <property type="match status" value="1"/>
</dbReference>
<dbReference type="PRINTS" id="PR00503">
    <property type="entry name" value="BROMODOMAIN"/>
</dbReference>
<dbReference type="SMART" id="SM00384">
    <property type="entry name" value="AT_hook"/>
    <property type="match status" value="4"/>
</dbReference>
<dbReference type="SMART" id="SM00297">
    <property type="entry name" value="BROMO"/>
    <property type="match status" value="1"/>
</dbReference>
<dbReference type="SMART" id="SM00571">
    <property type="entry name" value="DDT"/>
    <property type="match status" value="1"/>
</dbReference>
<dbReference type="SMART" id="SM00391">
    <property type="entry name" value="MBD"/>
    <property type="match status" value="1"/>
</dbReference>
<dbReference type="SMART" id="SM00249">
    <property type="entry name" value="PHD"/>
    <property type="match status" value="1"/>
</dbReference>
<dbReference type="SUPFAM" id="SSF47370">
    <property type="entry name" value="Bromodomain"/>
    <property type="match status" value="1"/>
</dbReference>
<dbReference type="SUPFAM" id="SSF54171">
    <property type="entry name" value="DNA-binding domain"/>
    <property type="match status" value="1"/>
</dbReference>
<dbReference type="SUPFAM" id="SSF57903">
    <property type="entry name" value="FYVE/PHD zinc finger"/>
    <property type="match status" value="1"/>
</dbReference>
<dbReference type="PROSITE" id="PS00633">
    <property type="entry name" value="BROMODOMAIN_1"/>
    <property type="match status" value="1"/>
</dbReference>
<dbReference type="PROSITE" id="PS50014">
    <property type="entry name" value="BROMODOMAIN_2"/>
    <property type="match status" value="1"/>
</dbReference>
<dbReference type="PROSITE" id="PS50827">
    <property type="entry name" value="DDT"/>
    <property type="match status" value="1"/>
</dbReference>
<dbReference type="PROSITE" id="PS50982">
    <property type="entry name" value="MBD"/>
    <property type="match status" value="1"/>
</dbReference>
<dbReference type="PROSITE" id="PS50016">
    <property type="entry name" value="ZF_PHD_2"/>
    <property type="match status" value="1"/>
</dbReference>
<name>BAZ2A_MOUSE</name>